<organism>
    <name type="scientific">Syntrophobacter fumaroxidans (strain DSM 10017 / MPOB)</name>
    <dbReference type="NCBI Taxonomy" id="335543"/>
    <lineage>
        <taxon>Bacteria</taxon>
        <taxon>Pseudomonadati</taxon>
        <taxon>Thermodesulfobacteriota</taxon>
        <taxon>Syntrophobacteria</taxon>
        <taxon>Syntrophobacterales</taxon>
        <taxon>Syntrophobacteraceae</taxon>
        <taxon>Syntrophobacter</taxon>
    </lineage>
</organism>
<gene>
    <name evidence="1" type="primary">rplA</name>
    <name type="ordered locus">Sfum_1546</name>
</gene>
<protein>
    <recommendedName>
        <fullName evidence="1">Large ribosomal subunit protein uL1</fullName>
    </recommendedName>
    <alternativeName>
        <fullName evidence="2">50S ribosomal protein L1</fullName>
    </alternativeName>
</protein>
<feature type="chain" id="PRO_0000308132" description="Large ribosomal subunit protein uL1">
    <location>
        <begin position="1"/>
        <end position="234"/>
    </location>
</feature>
<sequence>MAKHGKKYRAARATIDPAKRYTFQEALELATGSIFCKFDETLDIAVRLGVDPRHADQMVRGTVVLPNGLGKPVRVLVFAKGEKVKEALDAGADHAGGDELVDRIKEGWLEFDKTVATPDMMGAVGKIGKVLGPRGLMPNAKLGTVTFDLQKVVKEIKAGKVDFRVEKTGIVHAPMGKVSFGQEKLIQNISAFIDTLIRLKPTAAKGTYVRGIAISTTMGPGIQIDPLAVKTIVA</sequence>
<evidence type="ECO:0000255" key="1">
    <source>
        <dbReference type="HAMAP-Rule" id="MF_01318"/>
    </source>
</evidence>
<evidence type="ECO:0000305" key="2"/>
<comment type="function">
    <text evidence="1">Binds directly to 23S rRNA. The L1 stalk is quite mobile in the ribosome, and is involved in E site tRNA release.</text>
</comment>
<comment type="function">
    <text evidence="1">Protein L1 is also a translational repressor protein, it controls the translation of the L11 operon by binding to its mRNA.</text>
</comment>
<comment type="subunit">
    <text evidence="1">Part of the 50S ribosomal subunit.</text>
</comment>
<comment type="similarity">
    <text evidence="1">Belongs to the universal ribosomal protein uL1 family.</text>
</comment>
<reference key="1">
    <citation type="submission" date="2006-10" db="EMBL/GenBank/DDBJ databases">
        <title>Complete sequence of Syntrophobacter fumaroxidans MPOB.</title>
        <authorList>
            <consortium name="US DOE Joint Genome Institute"/>
            <person name="Copeland A."/>
            <person name="Lucas S."/>
            <person name="Lapidus A."/>
            <person name="Barry K."/>
            <person name="Detter J.C."/>
            <person name="Glavina del Rio T."/>
            <person name="Hammon N."/>
            <person name="Israni S."/>
            <person name="Pitluck S."/>
            <person name="Goltsman E.G."/>
            <person name="Martinez M."/>
            <person name="Schmutz J."/>
            <person name="Larimer F."/>
            <person name="Land M."/>
            <person name="Hauser L."/>
            <person name="Kyrpides N."/>
            <person name="Kim E."/>
            <person name="Boone D.R."/>
            <person name="Brockman F."/>
            <person name="Culley D."/>
            <person name="Ferry J."/>
            <person name="Gunsalus R."/>
            <person name="McInerney M.J."/>
            <person name="Morrison M."/>
            <person name="Plugge C."/>
            <person name="Rohlin L."/>
            <person name="Scholten J."/>
            <person name="Sieber J."/>
            <person name="Stams A.J.M."/>
            <person name="Worm P."/>
            <person name="Henstra A.M."/>
            <person name="Richardson P."/>
        </authorList>
    </citation>
    <scope>NUCLEOTIDE SEQUENCE [LARGE SCALE GENOMIC DNA]</scope>
    <source>
        <strain>DSM 10017 / MPOB</strain>
    </source>
</reference>
<proteinExistence type="inferred from homology"/>
<name>RL1_SYNFM</name>
<dbReference type="EMBL" id="CP000478">
    <property type="protein sequence ID" value="ABK17233.1"/>
    <property type="molecule type" value="Genomic_DNA"/>
</dbReference>
<dbReference type="RefSeq" id="WP_011698404.1">
    <property type="nucleotide sequence ID" value="NC_008554.1"/>
</dbReference>
<dbReference type="SMR" id="A0LII1"/>
<dbReference type="FunCoup" id="A0LII1">
    <property type="interactions" value="672"/>
</dbReference>
<dbReference type="STRING" id="335543.Sfum_1546"/>
<dbReference type="KEGG" id="sfu:Sfum_1546"/>
<dbReference type="eggNOG" id="COG0081">
    <property type="taxonomic scope" value="Bacteria"/>
</dbReference>
<dbReference type="HOGENOM" id="CLU_062853_0_0_7"/>
<dbReference type="InParanoid" id="A0LII1"/>
<dbReference type="OrthoDB" id="9803740at2"/>
<dbReference type="Proteomes" id="UP000001784">
    <property type="component" value="Chromosome"/>
</dbReference>
<dbReference type="GO" id="GO:0015934">
    <property type="term" value="C:large ribosomal subunit"/>
    <property type="evidence" value="ECO:0007669"/>
    <property type="project" value="InterPro"/>
</dbReference>
<dbReference type="GO" id="GO:0019843">
    <property type="term" value="F:rRNA binding"/>
    <property type="evidence" value="ECO:0007669"/>
    <property type="project" value="UniProtKB-UniRule"/>
</dbReference>
<dbReference type="GO" id="GO:0003735">
    <property type="term" value="F:structural constituent of ribosome"/>
    <property type="evidence" value="ECO:0007669"/>
    <property type="project" value="InterPro"/>
</dbReference>
<dbReference type="GO" id="GO:0000049">
    <property type="term" value="F:tRNA binding"/>
    <property type="evidence" value="ECO:0007669"/>
    <property type="project" value="UniProtKB-KW"/>
</dbReference>
<dbReference type="GO" id="GO:0006417">
    <property type="term" value="P:regulation of translation"/>
    <property type="evidence" value="ECO:0007669"/>
    <property type="project" value="UniProtKB-KW"/>
</dbReference>
<dbReference type="GO" id="GO:0006412">
    <property type="term" value="P:translation"/>
    <property type="evidence" value="ECO:0007669"/>
    <property type="project" value="UniProtKB-UniRule"/>
</dbReference>
<dbReference type="CDD" id="cd00403">
    <property type="entry name" value="Ribosomal_L1"/>
    <property type="match status" value="1"/>
</dbReference>
<dbReference type="FunFam" id="3.40.50.790:FF:000001">
    <property type="entry name" value="50S ribosomal protein L1"/>
    <property type="match status" value="1"/>
</dbReference>
<dbReference type="Gene3D" id="3.30.190.20">
    <property type="match status" value="1"/>
</dbReference>
<dbReference type="Gene3D" id="3.40.50.790">
    <property type="match status" value="1"/>
</dbReference>
<dbReference type="HAMAP" id="MF_01318_B">
    <property type="entry name" value="Ribosomal_uL1_B"/>
    <property type="match status" value="1"/>
</dbReference>
<dbReference type="InterPro" id="IPR005878">
    <property type="entry name" value="Ribosom_uL1_bac-type"/>
</dbReference>
<dbReference type="InterPro" id="IPR002143">
    <property type="entry name" value="Ribosomal_uL1"/>
</dbReference>
<dbReference type="InterPro" id="IPR023674">
    <property type="entry name" value="Ribosomal_uL1-like"/>
</dbReference>
<dbReference type="InterPro" id="IPR028364">
    <property type="entry name" value="Ribosomal_uL1/biogenesis"/>
</dbReference>
<dbReference type="InterPro" id="IPR016095">
    <property type="entry name" value="Ribosomal_uL1_3-a/b-sand"/>
</dbReference>
<dbReference type="InterPro" id="IPR023673">
    <property type="entry name" value="Ribosomal_uL1_CS"/>
</dbReference>
<dbReference type="NCBIfam" id="TIGR01169">
    <property type="entry name" value="rplA_bact"/>
    <property type="match status" value="1"/>
</dbReference>
<dbReference type="PANTHER" id="PTHR36427">
    <property type="entry name" value="54S RIBOSOMAL PROTEIN L1, MITOCHONDRIAL"/>
    <property type="match status" value="1"/>
</dbReference>
<dbReference type="PANTHER" id="PTHR36427:SF3">
    <property type="entry name" value="LARGE RIBOSOMAL SUBUNIT PROTEIN UL1M"/>
    <property type="match status" value="1"/>
</dbReference>
<dbReference type="Pfam" id="PF00687">
    <property type="entry name" value="Ribosomal_L1"/>
    <property type="match status" value="1"/>
</dbReference>
<dbReference type="PIRSF" id="PIRSF002155">
    <property type="entry name" value="Ribosomal_L1"/>
    <property type="match status" value="1"/>
</dbReference>
<dbReference type="SUPFAM" id="SSF56808">
    <property type="entry name" value="Ribosomal protein L1"/>
    <property type="match status" value="1"/>
</dbReference>
<dbReference type="PROSITE" id="PS01199">
    <property type="entry name" value="RIBOSOMAL_L1"/>
    <property type="match status" value="1"/>
</dbReference>
<keyword id="KW-1185">Reference proteome</keyword>
<keyword id="KW-0678">Repressor</keyword>
<keyword id="KW-0687">Ribonucleoprotein</keyword>
<keyword id="KW-0689">Ribosomal protein</keyword>
<keyword id="KW-0694">RNA-binding</keyword>
<keyword id="KW-0699">rRNA-binding</keyword>
<keyword id="KW-0810">Translation regulation</keyword>
<keyword id="KW-0820">tRNA-binding</keyword>
<accession>A0LII1</accession>